<organism>
    <name type="scientific">Arabidopsis thaliana</name>
    <name type="common">Mouse-ear cress</name>
    <dbReference type="NCBI Taxonomy" id="3702"/>
    <lineage>
        <taxon>Eukaryota</taxon>
        <taxon>Viridiplantae</taxon>
        <taxon>Streptophyta</taxon>
        <taxon>Embryophyta</taxon>
        <taxon>Tracheophyta</taxon>
        <taxon>Spermatophyta</taxon>
        <taxon>Magnoliopsida</taxon>
        <taxon>eudicotyledons</taxon>
        <taxon>Gunneridae</taxon>
        <taxon>Pentapetalae</taxon>
        <taxon>rosids</taxon>
        <taxon>malvids</taxon>
        <taxon>Brassicales</taxon>
        <taxon>Brassicaceae</taxon>
        <taxon>Camelineae</taxon>
        <taxon>Arabidopsis</taxon>
    </lineage>
</organism>
<gene>
    <name type="primary">ARP6</name>
    <name type="synonym">ESD1</name>
    <name type="synonym">SUF3</name>
    <name type="ordered locus">At3g33520</name>
    <name type="ORF">T4P3.8</name>
</gene>
<name>ARP6_ARATH</name>
<accession>Q8LGE3</accession>
<accession>Q8GZL0</accession>
<accession>Q8GZL1</accession>
<accession>Q8GZL2</accession>
<accession>Q8GZL3</accession>
<accession>Q8GZL4</accession>
<accession>Q8GZL5</accession>
<accession>Q8GZL6</accession>
<accession>Q8GZL7</accession>
<accession>Q8GZL8</accession>
<accession>Q8GZL9</accession>
<accession>Q8GZM0</accession>
<accession>Q8GZM1</accession>
<accession>Q8GZM2</accession>
<accession>Q8GZM3</accession>
<accession>Q8GZM4</accession>
<accession>Q8LKR0</accession>
<accession>Q949Z7</accession>
<accession>Q9SRK2</accession>
<reference key="1">
    <citation type="journal article" date="2002" name="Plant Physiol.">
        <title>Arabidopsis contains ancient classes of differentially expressed actin-related protein genes.</title>
        <authorList>
            <person name="McKinney E.C."/>
            <person name="Kandasamy M.K."/>
            <person name="Meagher R.B."/>
        </authorList>
    </citation>
    <scope>NUCLEOTIDE SEQUENCE [MRNA]</scope>
    <scope>IDENTIFICATION</scope>
    <scope>TISSUE SPECIFICITY</scope>
    <scope>GENE FAMILY</scope>
    <source>
        <strain>cv. Columbia</strain>
    </source>
</reference>
<reference key="2">
    <citation type="journal article" date="2000" name="Nature">
        <title>Sequence and analysis of chromosome 3 of the plant Arabidopsis thaliana.</title>
        <authorList>
            <person name="Salanoubat M."/>
            <person name="Lemcke K."/>
            <person name="Rieger M."/>
            <person name="Ansorge W."/>
            <person name="Unseld M."/>
            <person name="Fartmann B."/>
            <person name="Valle G."/>
            <person name="Bloecker H."/>
            <person name="Perez-Alonso M."/>
            <person name="Obermaier B."/>
            <person name="Delseny M."/>
            <person name="Boutry M."/>
            <person name="Grivell L.A."/>
            <person name="Mache R."/>
            <person name="Puigdomenech P."/>
            <person name="De Simone V."/>
            <person name="Choisne N."/>
            <person name="Artiguenave F."/>
            <person name="Robert C."/>
            <person name="Brottier P."/>
            <person name="Wincker P."/>
            <person name="Cattolico L."/>
            <person name="Weissenbach J."/>
            <person name="Saurin W."/>
            <person name="Quetier F."/>
            <person name="Schaefer M."/>
            <person name="Mueller-Auer S."/>
            <person name="Gabel C."/>
            <person name="Fuchs M."/>
            <person name="Benes V."/>
            <person name="Wurmbach E."/>
            <person name="Drzonek H."/>
            <person name="Erfle H."/>
            <person name="Jordan N."/>
            <person name="Bangert S."/>
            <person name="Wiedelmann R."/>
            <person name="Kranz H."/>
            <person name="Voss H."/>
            <person name="Holland R."/>
            <person name="Brandt P."/>
            <person name="Nyakatura G."/>
            <person name="Vezzi A."/>
            <person name="D'Angelo M."/>
            <person name="Pallavicini A."/>
            <person name="Toppo S."/>
            <person name="Simionati B."/>
            <person name="Conrad A."/>
            <person name="Hornischer K."/>
            <person name="Kauer G."/>
            <person name="Loehnert T.-H."/>
            <person name="Nordsiek G."/>
            <person name="Reichelt J."/>
            <person name="Scharfe M."/>
            <person name="Schoen O."/>
            <person name="Bargues M."/>
            <person name="Terol J."/>
            <person name="Climent J."/>
            <person name="Navarro P."/>
            <person name="Collado C."/>
            <person name="Perez-Perez A."/>
            <person name="Ottenwaelder B."/>
            <person name="Duchemin D."/>
            <person name="Cooke R."/>
            <person name="Laudie M."/>
            <person name="Berger-Llauro C."/>
            <person name="Purnelle B."/>
            <person name="Masuy D."/>
            <person name="de Haan M."/>
            <person name="Maarse A.C."/>
            <person name="Alcaraz J.-P."/>
            <person name="Cottet A."/>
            <person name="Casacuberta E."/>
            <person name="Monfort A."/>
            <person name="Argiriou A."/>
            <person name="Flores M."/>
            <person name="Liguori R."/>
            <person name="Vitale D."/>
            <person name="Mannhaupt G."/>
            <person name="Haase D."/>
            <person name="Schoof H."/>
            <person name="Rudd S."/>
            <person name="Zaccaria P."/>
            <person name="Mewes H.-W."/>
            <person name="Mayer K.F.X."/>
            <person name="Kaul S."/>
            <person name="Town C.D."/>
            <person name="Koo H.L."/>
            <person name="Tallon L.J."/>
            <person name="Jenkins J."/>
            <person name="Rooney T."/>
            <person name="Rizzo M."/>
            <person name="Walts A."/>
            <person name="Utterback T."/>
            <person name="Fujii C.Y."/>
            <person name="Shea T.P."/>
            <person name="Creasy T.H."/>
            <person name="Haas B."/>
            <person name="Maiti R."/>
            <person name="Wu D."/>
            <person name="Peterson J."/>
            <person name="Van Aken S."/>
            <person name="Pai G."/>
            <person name="Militscher J."/>
            <person name="Sellers P."/>
            <person name="Gill J.E."/>
            <person name="Feldblyum T.V."/>
            <person name="Preuss D."/>
            <person name="Lin X."/>
            <person name="Nierman W.C."/>
            <person name="Salzberg S.L."/>
            <person name="White O."/>
            <person name="Venter J.C."/>
            <person name="Fraser C.M."/>
            <person name="Kaneko T."/>
            <person name="Nakamura Y."/>
            <person name="Sato S."/>
            <person name="Kato T."/>
            <person name="Asamizu E."/>
            <person name="Sasamoto S."/>
            <person name="Kimura T."/>
            <person name="Idesawa K."/>
            <person name="Kawashima K."/>
            <person name="Kishida Y."/>
            <person name="Kiyokawa C."/>
            <person name="Kohara M."/>
            <person name="Matsumoto M."/>
            <person name="Matsuno A."/>
            <person name="Muraki A."/>
            <person name="Nakayama S."/>
            <person name="Nakazaki N."/>
            <person name="Shinpo S."/>
            <person name="Takeuchi C."/>
            <person name="Wada T."/>
            <person name="Watanabe A."/>
            <person name="Yamada M."/>
            <person name="Yasuda M."/>
            <person name="Tabata S."/>
        </authorList>
    </citation>
    <scope>NUCLEOTIDE SEQUENCE [LARGE SCALE GENOMIC DNA]</scope>
    <source>
        <strain>cv. Columbia</strain>
    </source>
</reference>
<reference key="3">
    <citation type="journal article" date="2017" name="Plant J.">
        <title>Araport11: a complete reannotation of the Arabidopsis thaliana reference genome.</title>
        <authorList>
            <person name="Cheng C.Y."/>
            <person name="Krishnakumar V."/>
            <person name="Chan A.P."/>
            <person name="Thibaud-Nissen F."/>
            <person name="Schobel S."/>
            <person name="Town C.D."/>
        </authorList>
    </citation>
    <scope>GENOME REANNOTATION</scope>
    <source>
        <strain>cv. Columbia</strain>
    </source>
</reference>
<reference key="4">
    <citation type="journal article" date="2003" name="Science">
        <title>Empirical analysis of transcriptional activity in the Arabidopsis genome.</title>
        <authorList>
            <person name="Yamada K."/>
            <person name="Lim J."/>
            <person name="Dale J.M."/>
            <person name="Chen H."/>
            <person name="Shinn P."/>
            <person name="Palm C.J."/>
            <person name="Southwick A.M."/>
            <person name="Wu H.C."/>
            <person name="Kim C.J."/>
            <person name="Nguyen M."/>
            <person name="Pham P.K."/>
            <person name="Cheuk R.F."/>
            <person name="Karlin-Newmann G."/>
            <person name="Liu S.X."/>
            <person name="Lam B."/>
            <person name="Sakano H."/>
            <person name="Wu T."/>
            <person name="Yu G."/>
            <person name="Miranda M."/>
            <person name="Quach H.L."/>
            <person name="Tripp M."/>
            <person name="Chang C.H."/>
            <person name="Lee J.M."/>
            <person name="Toriumi M.J."/>
            <person name="Chan M.M."/>
            <person name="Tang C.C."/>
            <person name="Onodera C.S."/>
            <person name="Deng J.M."/>
            <person name="Akiyama K."/>
            <person name="Ansari Y."/>
            <person name="Arakawa T."/>
            <person name="Banh J."/>
            <person name="Banno F."/>
            <person name="Bowser L."/>
            <person name="Brooks S.Y."/>
            <person name="Carninci P."/>
            <person name="Chao Q."/>
            <person name="Choy N."/>
            <person name="Enju A."/>
            <person name="Goldsmith A.D."/>
            <person name="Gurjal M."/>
            <person name="Hansen N.F."/>
            <person name="Hayashizaki Y."/>
            <person name="Johnson-Hopson C."/>
            <person name="Hsuan V.W."/>
            <person name="Iida K."/>
            <person name="Karnes M."/>
            <person name="Khan S."/>
            <person name="Koesema E."/>
            <person name="Ishida J."/>
            <person name="Jiang P.X."/>
            <person name="Jones T."/>
            <person name="Kawai J."/>
            <person name="Kamiya A."/>
            <person name="Meyers C."/>
            <person name="Nakajima M."/>
            <person name="Narusaka M."/>
            <person name="Seki M."/>
            <person name="Sakurai T."/>
            <person name="Satou M."/>
            <person name="Tamse R."/>
            <person name="Vaysberg M."/>
            <person name="Wallender E.K."/>
            <person name="Wong C."/>
            <person name="Yamamura Y."/>
            <person name="Yuan S."/>
            <person name="Shinozaki K."/>
            <person name="Davis R.W."/>
            <person name="Theologis A."/>
            <person name="Ecker J.R."/>
        </authorList>
    </citation>
    <scope>NUCLEOTIDE SEQUENCE [LARGE SCALE MRNA]</scope>
    <source>
        <strain>cv. Columbia</strain>
    </source>
</reference>
<reference key="5">
    <citation type="submission" date="2002-03" db="EMBL/GenBank/DDBJ databases">
        <title>Full-length cDNA from Arabidopsis thaliana.</title>
        <authorList>
            <person name="Brover V.V."/>
            <person name="Troukhan M.E."/>
            <person name="Alexandrov N.A."/>
            <person name="Lu Y.-P."/>
            <person name="Flavell R.B."/>
            <person name="Feldmann K.A."/>
        </authorList>
    </citation>
    <scope>NUCLEOTIDE SEQUENCE [LARGE SCALE MRNA]</scope>
</reference>
<reference key="6">
    <citation type="journal article" date="2003" name="Genome Res.">
        <title>Centromere satellites from Arabidopsis populations: maintenance of conserved and variable domains.</title>
        <authorList>
            <person name="Hall S.E."/>
            <person name="Kettler G."/>
            <person name="Preuss D."/>
        </authorList>
    </citation>
    <scope>NUCLEOTIDE SEQUENCE [MRNA] OF 230-312</scope>
    <scope>VARIANTS 230-ARG-LEU-231 DELINS PRO-PRO; PRO-231; SER-248; ARG-250; GLU-253; ARG-263; GLU-271; ASP-280; GLU-290; ILE-301; 308-GLN--ASP-311 DELINS SER-LEU-GLN-ILE; SER-310 AND VAL-311</scope>
    <source>
        <strain>cv. Aa-0</strain>
        <strain>cv. Ba-1</strain>
        <strain>cv. Cl-0</strain>
        <strain>cv. Columbia</strain>
        <strain>cv. Di-0</strain>
        <strain>cv. En-2</strain>
        <strain>cv. Goe-2</strain>
        <strain>cv. Gre-0</strain>
        <strain>cv. Hi-0</strain>
        <strain>cv. Kas-1</strain>
        <strain>cv. Kil-0</strain>
        <strain>cv. Lip-0</strain>
        <strain>cv. Oy-0</strain>
        <strain>cv. Ri-0</strain>
        <strain>cv. Yo-0</strain>
    </source>
</reference>
<reference key="7">
    <citation type="journal article" date="2004" name="Trends Plant Sci.">
        <title>Plant actin-related proteins.</title>
        <authorList>
            <person name="Kandasamy M.K."/>
            <person name="Deal R.B."/>
            <person name="McKinney E.C."/>
            <person name="Meagher R.B."/>
        </authorList>
    </citation>
    <scope>REVIEW</scope>
    <scope>GENE FAMILY</scope>
    <scope>NOMENCLATURE</scope>
</reference>
<reference key="8">
    <citation type="journal article" date="2005" name="Plant Cell">
        <title>The nuclear actin-related protein ARP6 is a pleiotropic developmental regulator required for the maintenance of FLOWERING LOCUS C expression and repression of flowering in Arabidopsis.</title>
        <authorList>
            <person name="Deal R.B."/>
            <person name="Kandasamy M.K."/>
            <person name="McKinney E.C."/>
            <person name="Meagher R.B."/>
        </authorList>
    </citation>
    <scope>FUNCTION</scope>
    <scope>TISSUE SPECIFICITY</scope>
    <scope>SUBCELLULAR LOCATION</scope>
</reference>
<reference key="9">
    <citation type="journal article" date="2005" name="Plant Cell">
        <title>SUPPRESSOR OF FRIGIDA3 encodes a nuclear ACTIN-RELATED PROTEIN6 required for floral repression in Arabidopsis.</title>
        <authorList>
            <person name="Choi K."/>
            <person name="Kim S."/>
            <person name="Kim S.Y."/>
            <person name="Kim M."/>
            <person name="Hyun Y."/>
            <person name="Lee H."/>
            <person name="Choe S."/>
            <person name="Kim S.-G."/>
            <person name="Michaels S."/>
            <person name="Lee I."/>
        </authorList>
    </citation>
    <scope>FUNCTION</scope>
    <scope>TISSUE SPECIFICITY</scope>
    <scope>SUBCELLULAR LOCATION</scope>
</reference>
<reference key="10">
    <citation type="journal article" date="2006" name="Development">
        <title>EARLY IN SHORT DAYS 1 (ESD1) encodes ACTIN-RELATED PROTEIN 6 (AtARP6), a putative component of chromatin remodelling complexes that positively regulates FLC accumulation in Arabidopsis.</title>
        <authorList>
            <person name="Martin-Trillo M."/>
            <person name="Lazaro A."/>
            <person name="Poethig R.S."/>
            <person name="Gomez-Mena C."/>
            <person name="Pineiro M.A."/>
            <person name="Martinez-Zapater J.M."/>
            <person name="Jarillo J.A."/>
        </authorList>
    </citation>
    <scope>FUNCTION</scope>
    <scope>TISSUE SPECIFICITY</scope>
</reference>
<reference key="11">
    <citation type="journal article" date="2007" name="Development">
        <title>Arabidopsis homologs of components of the SWR1 complex regulate flowering and plant development.</title>
        <authorList>
            <person name="Choi K."/>
            <person name="Park C."/>
            <person name="Lee J."/>
            <person name="Oh M."/>
            <person name="Noh B."/>
            <person name="Lee I."/>
        </authorList>
    </citation>
    <scope>FUNCTION</scope>
    <scope>SUBCELLULAR LOCATION</scope>
    <scope>INTERACTION WITH SWC6 AND PIE1</scope>
    <scope>SUBUNIT</scope>
</reference>
<reference key="12">
    <citation type="journal article" date="2007" name="Plant Cell">
        <title>Repression of flowering in Arabidopsis requires activation of FLOWERING LOCUS C expression by the histone variant H2A.Z.</title>
        <authorList>
            <person name="Deal R.B."/>
            <person name="Topp C.N."/>
            <person name="McKinney E.C."/>
            <person name="Meagher R.B."/>
        </authorList>
    </citation>
    <scope>FUNCTION</scope>
    <scope>DISRUPTION PHENOTYPE</scope>
    <scope>IDENTIFICATION IN THE SWR1 COMPLEX</scope>
    <scope>INTERACTION WITH H2A.F/Z PROTEINS</scope>
</reference>
<reference key="13">
    <citation type="journal article" date="2007" name="Plant Physiol.">
        <title>SEF, a new protein required for flowering repression in Arabidopsis, interacts with PIE1 and ARP6.</title>
        <authorList>
            <person name="March-Diaz R."/>
            <person name="Garcia-Dominguez M."/>
            <person name="Florencio F.J."/>
            <person name="Reyes J.C."/>
        </authorList>
    </citation>
    <scope>INTERACTION WITH PIE1 AND SWC6</scope>
</reference>
<reference key="14">
    <citation type="journal article" date="2008" name="Plant J.">
        <title>Histone H2A.Z and homologues of components of the SWR1 complex are required to control immunity in Arabidopsis.</title>
        <authorList>
            <person name="March-Diaz R."/>
            <person name="Garcia-Dominguez M."/>
            <person name="Lozano-Juste J."/>
            <person name="Leon J."/>
            <person name="Florencio F.J."/>
            <person name="Reyes J.C."/>
        </authorList>
    </citation>
    <scope>FUNCTION</scope>
</reference>
<protein>
    <recommendedName>
        <fullName>Actin-related protein 6</fullName>
    </recommendedName>
    <alternativeName>
        <fullName>Protein EARLY IN SHORT DAYS 1</fullName>
    </alternativeName>
    <alternativeName>
        <fullName>Protein SUPPRESSOR OF FRIGIDA 3</fullName>
    </alternativeName>
</protein>
<keyword id="KW-0156">Chromatin regulator</keyword>
<keyword id="KW-0963">Cytoplasm</keyword>
<keyword id="KW-0217">Developmental protein</keyword>
<keyword id="KW-0539">Nucleus</keyword>
<keyword id="KW-0611">Plant defense</keyword>
<keyword id="KW-1185">Reference proteome</keyword>
<evidence type="ECO:0000269" key="1">
    <source>
    </source>
</evidence>
<evidence type="ECO:0000269" key="2">
    <source>
    </source>
</evidence>
<evidence type="ECO:0000269" key="3">
    <source>
    </source>
</evidence>
<evidence type="ECO:0000269" key="4">
    <source>
    </source>
</evidence>
<evidence type="ECO:0000269" key="5">
    <source>
    </source>
</evidence>
<evidence type="ECO:0000269" key="6">
    <source>
    </source>
</evidence>
<evidence type="ECO:0000269" key="7">
    <source>
    </source>
</evidence>
<evidence type="ECO:0000269" key="8">
    <source>
    </source>
</evidence>
<evidence type="ECO:0000269" key="9">
    <source>
    </source>
</evidence>
<evidence type="ECO:0000305" key="10"/>
<dbReference type="EMBL" id="AF507914">
    <property type="protein sequence ID" value="AAM53246.1"/>
    <property type="molecule type" value="mRNA"/>
</dbReference>
<dbReference type="EMBL" id="AC009992">
    <property type="protein sequence ID" value="AAF03459.1"/>
    <property type="status" value="ALT_SEQ"/>
    <property type="molecule type" value="Genomic_DNA"/>
</dbReference>
<dbReference type="EMBL" id="CP002686">
    <property type="protein sequence ID" value="AEE77716.1"/>
    <property type="molecule type" value="Genomic_DNA"/>
</dbReference>
<dbReference type="EMBL" id="AY050786">
    <property type="protein sequence ID" value="AAK92721.1"/>
    <property type="molecule type" value="mRNA"/>
</dbReference>
<dbReference type="EMBL" id="AY150426">
    <property type="protein sequence ID" value="AAN12968.1"/>
    <property type="molecule type" value="mRNA"/>
</dbReference>
<dbReference type="EMBL" id="AY084321">
    <property type="protein sequence ID" value="AAM60907.1"/>
    <property type="molecule type" value="mRNA"/>
</dbReference>
<dbReference type="EMBL" id="AF494760">
    <property type="protein sequence ID" value="AAN77933.1"/>
    <property type="molecule type" value="Genomic_DNA"/>
</dbReference>
<dbReference type="EMBL" id="AF494761">
    <property type="protein sequence ID" value="AAN77934.1"/>
    <property type="molecule type" value="Genomic_DNA"/>
</dbReference>
<dbReference type="EMBL" id="AF494765">
    <property type="protein sequence ID" value="AAN77938.1"/>
    <property type="molecule type" value="Genomic_DNA"/>
</dbReference>
<dbReference type="EMBL" id="AF494766">
    <property type="protein sequence ID" value="AAN77939.1"/>
    <property type="molecule type" value="Genomic_DNA"/>
</dbReference>
<dbReference type="EMBL" id="AF494767">
    <property type="protein sequence ID" value="AAN77940.1"/>
    <property type="molecule type" value="Genomic_DNA"/>
</dbReference>
<dbReference type="EMBL" id="AF494770">
    <property type="protein sequence ID" value="AAN77943.1"/>
    <property type="molecule type" value="Genomic_DNA"/>
</dbReference>
<dbReference type="EMBL" id="AF494772">
    <property type="protein sequence ID" value="AAN77945.1"/>
    <property type="molecule type" value="Genomic_DNA"/>
</dbReference>
<dbReference type="EMBL" id="AF494773">
    <property type="protein sequence ID" value="AAN77946.1"/>
    <property type="molecule type" value="Genomic_DNA"/>
</dbReference>
<dbReference type="EMBL" id="AF494774">
    <property type="protein sequence ID" value="AAN77947.1"/>
    <property type="molecule type" value="Genomic_DNA"/>
</dbReference>
<dbReference type="EMBL" id="AF494776">
    <property type="protein sequence ID" value="AAN77949.1"/>
    <property type="molecule type" value="Genomic_DNA"/>
</dbReference>
<dbReference type="EMBL" id="AF494777">
    <property type="protein sequence ID" value="AAN77950.1"/>
    <property type="molecule type" value="Genomic_DNA"/>
</dbReference>
<dbReference type="EMBL" id="AF494782">
    <property type="protein sequence ID" value="AAN77955.1"/>
    <property type="molecule type" value="Genomic_DNA"/>
</dbReference>
<dbReference type="EMBL" id="AF494789">
    <property type="protein sequence ID" value="AAN77962.1"/>
    <property type="molecule type" value="Genomic_DNA"/>
</dbReference>
<dbReference type="EMBL" id="AF494792">
    <property type="protein sequence ID" value="AAN77965.1"/>
    <property type="molecule type" value="Genomic_DNA"/>
</dbReference>
<dbReference type="EMBL" id="AF494796">
    <property type="protein sequence ID" value="AAN77969.1"/>
    <property type="molecule type" value="Genomic_DNA"/>
</dbReference>
<dbReference type="EMBL" id="BK000425">
    <property type="protein sequence ID" value="DAA00030.1"/>
    <property type="molecule type" value="Genomic_DNA"/>
</dbReference>
<dbReference type="RefSeq" id="NP_566861.1">
    <property type="nucleotide sequence ID" value="NM_114070.4"/>
</dbReference>
<dbReference type="SMR" id="Q8LGE3"/>
<dbReference type="BioGRID" id="8476">
    <property type="interactions" value="5"/>
</dbReference>
<dbReference type="FunCoup" id="Q8LGE3">
    <property type="interactions" value="2710"/>
</dbReference>
<dbReference type="IntAct" id="Q8LGE3">
    <property type="interactions" value="2"/>
</dbReference>
<dbReference type="STRING" id="3702.Q8LGE3"/>
<dbReference type="iPTMnet" id="Q8LGE3"/>
<dbReference type="PaxDb" id="3702-AT3G33520.1"/>
<dbReference type="ProteomicsDB" id="246921"/>
<dbReference type="EnsemblPlants" id="AT3G33520.1">
    <property type="protein sequence ID" value="AT3G33520.1"/>
    <property type="gene ID" value="AT3G33520"/>
</dbReference>
<dbReference type="GeneID" id="823150"/>
<dbReference type="Gramene" id="AT3G33520.1">
    <property type="protein sequence ID" value="AT3G33520.1"/>
    <property type="gene ID" value="AT3G33520"/>
</dbReference>
<dbReference type="KEGG" id="ath:AT3G33520"/>
<dbReference type="Araport" id="AT3G33520"/>
<dbReference type="TAIR" id="AT3G33520">
    <property type="gene designation" value="ARP6"/>
</dbReference>
<dbReference type="eggNOG" id="KOG0676">
    <property type="taxonomic scope" value="Eukaryota"/>
</dbReference>
<dbReference type="HOGENOM" id="CLU_027965_1_1_1"/>
<dbReference type="InParanoid" id="Q8LGE3"/>
<dbReference type="OMA" id="FFEEYEC"/>
<dbReference type="OrthoDB" id="6220758at2759"/>
<dbReference type="PhylomeDB" id="Q8LGE3"/>
<dbReference type="PRO" id="PR:Q8LGE3"/>
<dbReference type="Proteomes" id="UP000006548">
    <property type="component" value="Chromosome 3"/>
</dbReference>
<dbReference type="ExpressionAtlas" id="Q8LGE3">
    <property type="expression patterns" value="baseline and differential"/>
</dbReference>
<dbReference type="GO" id="GO:0005737">
    <property type="term" value="C:cytoplasm"/>
    <property type="evidence" value="ECO:0007669"/>
    <property type="project" value="UniProtKB-SubCell"/>
</dbReference>
<dbReference type="GO" id="GO:0005634">
    <property type="term" value="C:nucleus"/>
    <property type="evidence" value="ECO:0000314"/>
    <property type="project" value="TAIR"/>
</dbReference>
<dbReference type="GO" id="GO:0000812">
    <property type="term" value="C:Swr1 complex"/>
    <property type="evidence" value="ECO:0000314"/>
    <property type="project" value="TAIR"/>
</dbReference>
<dbReference type="GO" id="GO:0005200">
    <property type="term" value="F:structural constituent of cytoskeleton"/>
    <property type="evidence" value="ECO:0000250"/>
    <property type="project" value="TAIR"/>
</dbReference>
<dbReference type="GO" id="GO:0030029">
    <property type="term" value="P:actin filament-based process"/>
    <property type="evidence" value="ECO:0000304"/>
    <property type="project" value="TAIR"/>
</dbReference>
<dbReference type="GO" id="GO:0051301">
    <property type="term" value="P:cell division"/>
    <property type="evidence" value="ECO:0000315"/>
    <property type="project" value="TAIR"/>
</dbReference>
<dbReference type="GO" id="GO:0006338">
    <property type="term" value="P:chromatin remodeling"/>
    <property type="evidence" value="ECO:0000315"/>
    <property type="project" value="TAIR"/>
</dbReference>
<dbReference type="GO" id="GO:0006952">
    <property type="term" value="P:defense response"/>
    <property type="evidence" value="ECO:0007669"/>
    <property type="project" value="UniProtKB-KW"/>
</dbReference>
<dbReference type="GO" id="GO:0009910">
    <property type="term" value="P:negative regulation of flower development"/>
    <property type="evidence" value="ECO:0000315"/>
    <property type="project" value="TAIR"/>
</dbReference>
<dbReference type="GO" id="GO:0006355">
    <property type="term" value="P:regulation of DNA-templated transcription"/>
    <property type="evidence" value="ECO:0000315"/>
    <property type="project" value="TAIR"/>
</dbReference>
<dbReference type="GO" id="GO:0006970">
    <property type="term" value="P:response to osmotic stress"/>
    <property type="evidence" value="ECO:0000315"/>
    <property type="project" value="TAIR"/>
</dbReference>
<dbReference type="GO" id="GO:0009266">
    <property type="term" value="P:response to temperature stimulus"/>
    <property type="evidence" value="ECO:0000315"/>
    <property type="project" value="TAIR"/>
</dbReference>
<dbReference type="GO" id="GO:0009845">
    <property type="term" value="P:seed germination"/>
    <property type="evidence" value="ECO:0000315"/>
    <property type="project" value="TAIR"/>
</dbReference>
<dbReference type="CDD" id="cd10210">
    <property type="entry name" value="ASKHA_NBD_Arp6"/>
    <property type="match status" value="1"/>
</dbReference>
<dbReference type="FunFam" id="2.30.36.70:FF:000006">
    <property type="entry name" value="Actin-related protein 6"/>
    <property type="match status" value="1"/>
</dbReference>
<dbReference type="FunFam" id="3.30.420.40:FF:000187">
    <property type="entry name" value="Actin-related protein 6"/>
    <property type="match status" value="1"/>
</dbReference>
<dbReference type="FunFam" id="3.30.420.40:FF:000048">
    <property type="entry name" value="ARP5 actin-related protein 5 homolog"/>
    <property type="match status" value="1"/>
</dbReference>
<dbReference type="FunFam" id="3.30.420.40:FF:000058">
    <property type="entry name" value="Putative actin-related protein 5"/>
    <property type="match status" value="1"/>
</dbReference>
<dbReference type="FunFam" id="3.90.640.10:FF:000014">
    <property type="entry name" value="Putative actin-related protein 6"/>
    <property type="match status" value="1"/>
</dbReference>
<dbReference type="Gene3D" id="3.30.420.40">
    <property type="match status" value="2"/>
</dbReference>
<dbReference type="Gene3D" id="2.30.36.70">
    <property type="entry name" value="Actin, Chain A, domain 2"/>
    <property type="match status" value="1"/>
</dbReference>
<dbReference type="Gene3D" id="3.90.640.10">
    <property type="entry name" value="Actin, Chain A, domain 4"/>
    <property type="match status" value="1"/>
</dbReference>
<dbReference type="InterPro" id="IPR004000">
    <property type="entry name" value="Actin"/>
</dbReference>
<dbReference type="InterPro" id="IPR043129">
    <property type="entry name" value="ATPase_NBD"/>
</dbReference>
<dbReference type="PANTHER" id="PTHR11937">
    <property type="entry name" value="ACTIN"/>
    <property type="match status" value="1"/>
</dbReference>
<dbReference type="Pfam" id="PF00022">
    <property type="entry name" value="Actin"/>
    <property type="match status" value="1"/>
</dbReference>
<dbReference type="SMART" id="SM00268">
    <property type="entry name" value="ACTIN"/>
    <property type="match status" value="1"/>
</dbReference>
<dbReference type="SUPFAM" id="SSF53067">
    <property type="entry name" value="Actin-like ATPase domain"/>
    <property type="match status" value="2"/>
</dbReference>
<feature type="chain" id="PRO_0000320535" description="Actin-related protein 6">
    <location>
        <begin position="1"/>
        <end position="421"/>
    </location>
</feature>
<feature type="sequence variant" description="In strain: cv. Lip-0." evidence="2">
    <original>RL</original>
    <variation>PP</variation>
    <location>
        <begin position="230"/>
        <end position="231"/>
    </location>
</feature>
<feature type="sequence variant" description="In strain: cv. Aa-0." evidence="2">
    <original>L</original>
    <variation>P</variation>
    <location>
        <position position="231"/>
    </location>
</feature>
<feature type="sequence variant" description="In strain: cv. Goe-2." evidence="2">
    <original>G</original>
    <variation>S</variation>
    <location>
        <position position="248"/>
    </location>
</feature>
<feature type="sequence variant" description="In strain: cv. Ri-0." evidence="2">
    <original>T</original>
    <variation>R</variation>
    <location>
        <position position="250"/>
    </location>
</feature>
<feature type="sequence variant" description="In strain: cv. Gre-0 and cv. Kas-1." evidence="2">
    <original>K</original>
    <variation>E</variation>
    <location>
        <position position="253"/>
    </location>
</feature>
<feature type="sequence variant" description="In strain: cv. Di-0 and cv. Kil-0." evidence="2">
    <original>K</original>
    <variation>R</variation>
    <location>
        <position position="263"/>
    </location>
</feature>
<feature type="sequence variant" description="In strain: cv. Cl-0." evidence="2">
    <original>K</original>
    <variation>E</variation>
    <location>
        <position position="271"/>
    </location>
</feature>
<feature type="sequence variant" description="In strain: cv. Yo-0." evidence="2">
    <original>V</original>
    <variation>D</variation>
    <location>
        <position position="280"/>
    </location>
</feature>
<feature type="sequence variant" description="In strain: cv. Kil-0." evidence="2">
    <original>K</original>
    <variation>E</variation>
    <location>
        <position position="290"/>
    </location>
</feature>
<feature type="sequence variant" description="In strain: cv. Yo-0." evidence="2">
    <original>L</original>
    <variation>I</variation>
    <location>
        <position position="301"/>
    </location>
</feature>
<feature type="sequence variant" description="In strain: cv. Ba-1." evidence="2">
    <original>QPAD</original>
    <variation>SLQI</variation>
    <location>
        <begin position="308"/>
        <end position="311"/>
    </location>
</feature>
<feature type="sequence variant" description="In strain: cv. En-2." evidence="2">
    <original>A</original>
    <variation>S</variation>
    <location>
        <position position="310"/>
    </location>
</feature>
<feature type="sequence variant" description="In strain: cv. Oy-0." evidence="2">
    <original>D</original>
    <variation>V</variation>
    <location>
        <position position="311"/>
    </location>
</feature>
<feature type="sequence conflict" description="In Ref. 1; AAM53246." evidence="10" ref="1">
    <original>M</original>
    <variation>MG</variation>
    <location>
        <position position="1"/>
    </location>
</feature>
<feature type="sequence conflict" description="In Ref. 1; AAM53246." evidence="10" ref="1">
    <original>V</original>
    <variation>F</variation>
    <location>
        <position position="6"/>
    </location>
</feature>
<feature type="sequence conflict" description="In Ref. 4; AAK92721 and 6; AAN77965." evidence="10" ref="4 6">
    <original>T</original>
    <variation>I</variation>
    <location>
        <position position="250"/>
    </location>
</feature>
<feature type="sequence conflict" description="In Ref. 6; AAN77939." evidence="10" ref="6">
    <original>N</original>
    <variation>I</variation>
    <location>
        <position position="291"/>
    </location>
</feature>
<comment type="function">
    <text evidence="3 4 5 7 8 9">Component of the SWR1 complex which mediates the ATP-dependent exchange of histone H2A for the H2A variant H2A.F/Z leading to transcriptional regulation of selected genes (e.g. FLC) by chromatin remodeling. Binds to the promoter region of FLC chromatin. Required for the activation of FLC and FLC/MAF genes expression to levels that inhibit flowering, through both histone H3 and H4 acetylation and methylation mechanisms. Involved in several developmental processes including organization of plant organs, leaves formation, flowering time repression, and fertility. Modulates photoperiod-dependent epidermal leaves cell development; promotes cell division in long days, and cell expansion/division in short days. May be involved in the regulation of pathogenesis-related proteins (PRs).</text>
</comment>
<comment type="subunit">
    <text evidence="6 7 8">Component of the SWR1 chromatin-remodeling complex composed of at least ARP6/ESD1/SUF3, PIE1, SWC6, SWC2 and H2AZs (HTA8, HTA9, HTA11). Interacts directly with SWC6/SEF and PIE1. Also interacts with H2A.F/Z proteins.</text>
</comment>
<comment type="interaction">
    <interactant intactId="EBI-1537316">
        <id>Q8LGE3</id>
    </interactant>
    <interactant intactId="EBI-1537462">
        <id>Q7X9V2</id>
        <label>PIE1</label>
    </interactant>
    <organismsDiffer>false</organismsDiffer>
    <experiments>4</experiments>
</comment>
<comment type="interaction">
    <interactant intactId="EBI-1537316">
        <id>Q8LGE3</id>
    </interactant>
    <interactant intactId="EBI-1537353">
        <id>Q9FHW2</id>
        <label>SWC6</label>
    </interactant>
    <organismsDiffer>false</organismsDiffer>
    <experiments>6</experiments>
</comment>
<comment type="subcellular location">
    <subcellularLocation>
        <location evidence="3 4 8">Nucleus</location>
    </subcellularLocation>
    <subcellularLocation>
        <location evidence="3">Cytoplasm</location>
    </subcellularLocation>
    <text>Localized in the nucleus during the interphase, but is released into the cytoplasm during the mitotic phase (PubMed:16141450). Associated to heterochromatin (PubMed:16141450). Localized at the nuclear periphery when interacting with SWC6 (PubMed:16155178, PubMed:17470967).</text>
</comment>
<comment type="tissue specificity">
    <text evidence="1 3 4 5">Mostly expressed in flowers, and, to a lower extent, in seedlings, shoot apex, stems, siliques, seeds, and roots (at protein level).</text>
</comment>
<comment type="disruption phenotype">
    <text evidence="7">Early flowering, leaf serration, production of extra petals and weak apical dominance.</text>
</comment>
<comment type="similarity">
    <text evidence="10">Belongs to the actin family. ARP6 subfamily.</text>
</comment>
<comment type="sequence caution" evidence="10">
    <conflict type="erroneous gene model prediction">
        <sequence resource="EMBL-CDS" id="AAF03459"/>
    </conflict>
</comment>
<sequence>MSNIVVLDNGGGLIKAGQGGERDPTTVIPNCLYKPLSSKKFIHPSPLTTLSDEIDLTSAAVRRPIDRGYLINSDLQREIWSHLFTSLLHIAPSSSSLLLTEAPLSIPSVQRTTDELVFEDFGFSSLYIAHPQSLVHLYEASRQPDSILSKTQCSLVVDCGFSFTHAVPVLHNFTLNHAIKRIDLGGKAFTNYLKELVSYRSINVMDETFLVDDAKEKLCFVSLDLLRDLRLARNGNTLIKSTYVLPDGVTHTKGYVKDPQAAKRFLSLSEKESVVVMDKVGERKKADMNKNEIDLTNERFLVPETLFQPADLGMNQAGLAECIVRAINSCHSYLQPVLYQSIILTGGSTLFPQLKERLEGELRPLVPDHFDVKITTQEDPILGVWRGGSLLASSPDFESMCVTKAEYEELGSARCRRRFFH</sequence>
<proteinExistence type="evidence at protein level"/>